<reference key="1">
    <citation type="journal article" date="2007" name="Genes Dev.">
        <title>New insights into Acinetobacter baumannii pathogenesis revealed by high-density pyrosequencing and transposon mutagenesis.</title>
        <authorList>
            <person name="Smith M.G."/>
            <person name="Gianoulis T.A."/>
            <person name="Pukatzki S."/>
            <person name="Mekalanos J.J."/>
            <person name="Ornston L.N."/>
            <person name="Gerstein M."/>
            <person name="Snyder M."/>
        </authorList>
    </citation>
    <scope>NUCLEOTIDE SEQUENCE [LARGE SCALE GENOMIC DNA]</scope>
    <source>
        <strain>ATCC 17978 / DSM 105126 / CIP 53.77 / LMG 1025 / NCDC KC755 / 5377</strain>
    </source>
</reference>
<dbReference type="EC" id="6.1.1.16" evidence="1"/>
<dbReference type="EMBL" id="CP000521">
    <property type="protein sequence ID" value="ABO11663.2"/>
    <property type="molecule type" value="Genomic_DNA"/>
</dbReference>
<dbReference type="RefSeq" id="WP_001182287.1">
    <property type="nucleotide sequence ID" value="NZ_CP053098.1"/>
</dbReference>
<dbReference type="SMR" id="A3M419"/>
<dbReference type="KEGG" id="acb:A1S_1235"/>
<dbReference type="HOGENOM" id="CLU_013528_0_1_6"/>
<dbReference type="GO" id="GO:0005829">
    <property type="term" value="C:cytosol"/>
    <property type="evidence" value="ECO:0007669"/>
    <property type="project" value="TreeGrafter"/>
</dbReference>
<dbReference type="GO" id="GO:0005524">
    <property type="term" value="F:ATP binding"/>
    <property type="evidence" value="ECO:0007669"/>
    <property type="project" value="UniProtKB-UniRule"/>
</dbReference>
<dbReference type="GO" id="GO:0004817">
    <property type="term" value="F:cysteine-tRNA ligase activity"/>
    <property type="evidence" value="ECO:0007669"/>
    <property type="project" value="UniProtKB-UniRule"/>
</dbReference>
<dbReference type="GO" id="GO:0008270">
    <property type="term" value="F:zinc ion binding"/>
    <property type="evidence" value="ECO:0007669"/>
    <property type="project" value="UniProtKB-UniRule"/>
</dbReference>
<dbReference type="GO" id="GO:0006423">
    <property type="term" value="P:cysteinyl-tRNA aminoacylation"/>
    <property type="evidence" value="ECO:0007669"/>
    <property type="project" value="UniProtKB-UniRule"/>
</dbReference>
<dbReference type="CDD" id="cd07963">
    <property type="entry name" value="Anticodon_Ia_Cys"/>
    <property type="match status" value="1"/>
</dbReference>
<dbReference type="CDD" id="cd00672">
    <property type="entry name" value="CysRS_core"/>
    <property type="match status" value="1"/>
</dbReference>
<dbReference type="FunFam" id="3.40.50.620:FF:000009">
    <property type="entry name" value="Cysteine--tRNA ligase"/>
    <property type="match status" value="1"/>
</dbReference>
<dbReference type="Gene3D" id="1.20.120.1910">
    <property type="entry name" value="Cysteine-tRNA ligase, C-terminal anti-codon recognition domain"/>
    <property type="match status" value="1"/>
</dbReference>
<dbReference type="Gene3D" id="3.40.50.620">
    <property type="entry name" value="HUPs"/>
    <property type="match status" value="1"/>
</dbReference>
<dbReference type="HAMAP" id="MF_00041">
    <property type="entry name" value="Cys_tRNA_synth"/>
    <property type="match status" value="1"/>
</dbReference>
<dbReference type="InterPro" id="IPR015803">
    <property type="entry name" value="Cys-tRNA-ligase"/>
</dbReference>
<dbReference type="InterPro" id="IPR015273">
    <property type="entry name" value="Cys-tRNA-synt_Ia_DALR"/>
</dbReference>
<dbReference type="InterPro" id="IPR024909">
    <property type="entry name" value="Cys-tRNA/MSH_ligase"/>
</dbReference>
<dbReference type="InterPro" id="IPR014729">
    <property type="entry name" value="Rossmann-like_a/b/a_fold"/>
</dbReference>
<dbReference type="InterPro" id="IPR032678">
    <property type="entry name" value="tRNA-synt_1_cat_dom"/>
</dbReference>
<dbReference type="InterPro" id="IPR009080">
    <property type="entry name" value="tRNAsynth_Ia_anticodon-bd"/>
</dbReference>
<dbReference type="NCBIfam" id="TIGR00435">
    <property type="entry name" value="cysS"/>
    <property type="match status" value="1"/>
</dbReference>
<dbReference type="PANTHER" id="PTHR10890:SF3">
    <property type="entry name" value="CYSTEINE--TRNA LIGASE, CYTOPLASMIC"/>
    <property type="match status" value="1"/>
</dbReference>
<dbReference type="PANTHER" id="PTHR10890">
    <property type="entry name" value="CYSTEINYL-TRNA SYNTHETASE"/>
    <property type="match status" value="1"/>
</dbReference>
<dbReference type="Pfam" id="PF09190">
    <property type="entry name" value="DALR_2"/>
    <property type="match status" value="1"/>
</dbReference>
<dbReference type="Pfam" id="PF01406">
    <property type="entry name" value="tRNA-synt_1e"/>
    <property type="match status" value="1"/>
</dbReference>
<dbReference type="PRINTS" id="PR00983">
    <property type="entry name" value="TRNASYNTHCYS"/>
</dbReference>
<dbReference type="SMART" id="SM00840">
    <property type="entry name" value="DALR_2"/>
    <property type="match status" value="1"/>
</dbReference>
<dbReference type="SUPFAM" id="SSF47323">
    <property type="entry name" value="Anticodon-binding domain of a subclass of class I aminoacyl-tRNA synthetases"/>
    <property type="match status" value="1"/>
</dbReference>
<dbReference type="SUPFAM" id="SSF52374">
    <property type="entry name" value="Nucleotidylyl transferase"/>
    <property type="match status" value="1"/>
</dbReference>
<organism>
    <name type="scientific">Acinetobacter baumannii (strain ATCC 17978 / DSM 105126 / CIP 53.77 / LMG 1025 / NCDC KC755 / 5377)</name>
    <dbReference type="NCBI Taxonomy" id="400667"/>
    <lineage>
        <taxon>Bacteria</taxon>
        <taxon>Pseudomonadati</taxon>
        <taxon>Pseudomonadota</taxon>
        <taxon>Gammaproteobacteria</taxon>
        <taxon>Moraxellales</taxon>
        <taxon>Moraxellaceae</taxon>
        <taxon>Acinetobacter</taxon>
        <taxon>Acinetobacter calcoaceticus/baumannii complex</taxon>
    </lineage>
</organism>
<sequence length="473" mass="54170">MQPFVLYNSEQRKKVEFVPRKEGHIDMYVCGMTVYDYCHIGHARVMVAFDYIIRFLRSQGWKVRYIRNITDIDDKIIKRANENGETIQQLTTRFIDAMNEDAANLGCLAPDEAPKATEYIDQMQNMIGNLVNKGAAYPASNGDVYFEVTKFEKYGRLSGRKLEDMQAGASERVDVEVEKKHPFDFVLWKHAKENEPSWASPWGNGRPGWHIECSAMSTCCLGNHFDIHGGGSDLMFPHHENEIAQSEASTGEQYVNYWMHVGFINVDGEKMSKSLGNFFTIRDVMEKFHPEVIRYFIVSSHYRSPVNFSDVALKEAKTSLTRFYHSFKAYQQVYGQTTTEALDQSFIERFNNAMCDDFNTAEAMAVLFELNKELNRAVKEEQADQATVLYSTLRHLTNILGLVQHNVDDFLKSDIGQDALALSDAEIEDFIQQRVDAKKAKDFAKADSIRQSLLEQGVVLEDTRQGTVWRRAD</sequence>
<comment type="catalytic activity">
    <reaction evidence="1">
        <text>tRNA(Cys) + L-cysteine + ATP = L-cysteinyl-tRNA(Cys) + AMP + diphosphate</text>
        <dbReference type="Rhea" id="RHEA:17773"/>
        <dbReference type="Rhea" id="RHEA-COMP:9661"/>
        <dbReference type="Rhea" id="RHEA-COMP:9679"/>
        <dbReference type="ChEBI" id="CHEBI:30616"/>
        <dbReference type="ChEBI" id="CHEBI:33019"/>
        <dbReference type="ChEBI" id="CHEBI:35235"/>
        <dbReference type="ChEBI" id="CHEBI:78442"/>
        <dbReference type="ChEBI" id="CHEBI:78517"/>
        <dbReference type="ChEBI" id="CHEBI:456215"/>
        <dbReference type="EC" id="6.1.1.16"/>
    </reaction>
</comment>
<comment type="cofactor">
    <cofactor evidence="1">
        <name>Zn(2+)</name>
        <dbReference type="ChEBI" id="CHEBI:29105"/>
    </cofactor>
    <text evidence="1">Binds 1 zinc ion per subunit.</text>
</comment>
<comment type="subunit">
    <text evidence="1">Monomer.</text>
</comment>
<comment type="subcellular location">
    <subcellularLocation>
        <location evidence="1">Cytoplasm</location>
    </subcellularLocation>
</comment>
<comment type="similarity">
    <text evidence="1">Belongs to the class-I aminoacyl-tRNA synthetase family.</text>
</comment>
<keyword id="KW-0030">Aminoacyl-tRNA synthetase</keyword>
<keyword id="KW-0067">ATP-binding</keyword>
<keyword id="KW-0963">Cytoplasm</keyword>
<keyword id="KW-0436">Ligase</keyword>
<keyword id="KW-0479">Metal-binding</keyword>
<keyword id="KW-0547">Nucleotide-binding</keyword>
<keyword id="KW-0648">Protein biosynthesis</keyword>
<keyword id="KW-0862">Zinc</keyword>
<gene>
    <name evidence="1" type="primary">cysS</name>
    <name type="ordered locus">A1S_1235</name>
</gene>
<protein>
    <recommendedName>
        <fullName evidence="1">Cysteine--tRNA ligase</fullName>
        <ecNumber evidence="1">6.1.1.16</ecNumber>
    </recommendedName>
    <alternativeName>
        <fullName evidence="1">Cysteinyl-tRNA synthetase</fullName>
        <shortName evidence="1">CysRS</shortName>
    </alternativeName>
</protein>
<proteinExistence type="inferred from homology"/>
<accession>A3M419</accession>
<evidence type="ECO:0000255" key="1">
    <source>
        <dbReference type="HAMAP-Rule" id="MF_00041"/>
    </source>
</evidence>
<feature type="chain" id="PRO_0000332780" description="Cysteine--tRNA ligase">
    <location>
        <begin position="1"/>
        <end position="473"/>
    </location>
</feature>
<feature type="short sequence motif" description="'HIGH' region">
    <location>
        <begin position="32"/>
        <end position="42"/>
    </location>
</feature>
<feature type="short sequence motif" description="'KMSKS' region">
    <location>
        <begin position="270"/>
        <end position="274"/>
    </location>
</feature>
<feature type="binding site" evidence="1">
    <location>
        <position position="30"/>
    </location>
    <ligand>
        <name>Zn(2+)</name>
        <dbReference type="ChEBI" id="CHEBI:29105"/>
    </ligand>
</feature>
<feature type="binding site" evidence="1">
    <location>
        <position position="213"/>
    </location>
    <ligand>
        <name>Zn(2+)</name>
        <dbReference type="ChEBI" id="CHEBI:29105"/>
    </ligand>
</feature>
<feature type="binding site" evidence="1">
    <location>
        <position position="238"/>
    </location>
    <ligand>
        <name>Zn(2+)</name>
        <dbReference type="ChEBI" id="CHEBI:29105"/>
    </ligand>
</feature>
<feature type="binding site" evidence="1">
    <location>
        <position position="242"/>
    </location>
    <ligand>
        <name>Zn(2+)</name>
        <dbReference type="ChEBI" id="CHEBI:29105"/>
    </ligand>
</feature>
<feature type="binding site" evidence="1">
    <location>
        <position position="273"/>
    </location>
    <ligand>
        <name>ATP</name>
        <dbReference type="ChEBI" id="CHEBI:30616"/>
    </ligand>
</feature>
<name>SYC_ACIBT</name>